<protein>
    <recommendedName>
        <fullName evidence="1">Nucleoid occlusion factor SlmA</fullName>
    </recommendedName>
</protein>
<accession>A1JHW9</accession>
<gene>
    <name evidence="1" type="primary">slmA</name>
    <name type="ordered locus">YE0060</name>
</gene>
<reference key="1">
    <citation type="journal article" date="2006" name="PLoS Genet.">
        <title>The complete genome sequence and comparative genome analysis of the high pathogenicity Yersinia enterocolitica strain 8081.</title>
        <authorList>
            <person name="Thomson N.R."/>
            <person name="Howard S."/>
            <person name="Wren B.W."/>
            <person name="Holden M.T.G."/>
            <person name="Crossman L."/>
            <person name="Challis G.L."/>
            <person name="Churcher C."/>
            <person name="Mungall K."/>
            <person name="Brooks K."/>
            <person name="Chillingworth T."/>
            <person name="Feltwell T."/>
            <person name="Abdellah Z."/>
            <person name="Hauser H."/>
            <person name="Jagels K."/>
            <person name="Maddison M."/>
            <person name="Moule S."/>
            <person name="Sanders M."/>
            <person name="Whitehead S."/>
            <person name="Quail M.A."/>
            <person name="Dougan G."/>
            <person name="Parkhill J."/>
            <person name="Prentice M.B."/>
        </authorList>
    </citation>
    <scope>NUCLEOTIDE SEQUENCE [LARGE SCALE GENOMIC DNA]</scope>
    <source>
        <strain>NCTC 13174 / 8081</strain>
    </source>
</reference>
<keyword id="KW-0131">Cell cycle</keyword>
<keyword id="KW-0132">Cell division</keyword>
<keyword id="KW-0175">Coiled coil</keyword>
<keyword id="KW-0963">Cytoplasm</keyword>
<keyword id="KW-0238">DNA-binding</keyword>
<name>SLMA_YERE8</name>
<dbReference type="EMBL" id="AM286415">
    <property type="protein sequence ID" value="CAL10202.1"/>
    <property type="molecule type" value="Genomic_DNA"/>
</dbReference>
<dbReference type="RefSeq" id="WP_004714376.1">
    <property type="nucleotide sequence ID" value="NC_008800.1"/>
</dbReference>
<dbReference type="RefSeq" id="YP_001004454.1">
    <property type="nucleotide sequence ID" value="NC_008800.1"/>
</dbReference>
<dbReference type="SMR" id="A1JHW9"/>
<dbReference type="GeneID" id="93972986"/>
<dbReference type="KEGG" id="yen:YE0060"/>
<dbReference type="PATRIC" id="fig|393305.7.peg.148"/>
<dbReference type="eggNOG" id="COG1309">
    <property type="taxonomic scope" value="Bacteria"/>
</dbReference>
<dbReference type="HOGENOM" id="CLU_069356_5_0_6"/>
<dbReference type="OrthoDB" id="9179041at2"/>
<dbReference type="Proteomes" id="UP000000642">
    <property type="component" value="Chromosome"/>
</dbReference>
<dbReference type="GO" id="GO:0043590">
    <property type="term" value="C:bacterial nucleoid"/>
    <property type="evidence" value="ECO:0007669"/>
    <property type="project" value="UniProtKB-UniRule"/>
</dbReference>
<dbReference type="GO" id="GO:0005737">
    <property type="term" value="C:cytoplasm"/>
    <property type="evidence" value="ECO:0007669"/>
    <property type="project" value="UniProtKB-UniRule"/>
</dbReference>
<dbReference type="GO" id="GO:0003700">
    <property type="term" value="F:DNA-binding transcription factor activity"/>
    <property type="evidence" value="ECO:0007669"/>
    <property type="project" value="TreeGrafter"/>
</dbReference>
<dbReference type="GO" id="GO:0000976">
    <property type="term" value="F:transcription cis-regulatory region binding"/>
    <property type="evidence" value="ECO:0007669"/>
    <property type="project" value="TreeGrafter"/>
</dbReference>
<dbReference type="GO" id="GO:0051301">
    <property type="term" value="P:cell division"/>
    <property type="evidence" value="ECO:0007669"/>
    <property type="project" value="UniProtKB-KW"/>
</dbReference>
<dbReference type="GO" id="GO:0010974">
    <property type="term" value="P:negative regulation of division septum assembly"/>
    <property type="evidence" value="ECO:0007669"/>
    <property type="project" value="InterPro"/>
</dbReference>
<dbReference type="FunFam" id="1.10.357.10:FF:000002">
    <property type="entry name" value="Nucleoid occlusion factor SlmA"/>
    <property type="match status" value="1"/>
</dbReference>
<dbReference type="Gene3D" id="1.10.357.10">
    <property type="entry name" value="Tetracycline Repressor, domain 2"/>
    <property type="match status" value="1"/>
</dbReference>
<dbReference type="HAMAP" id="MF_01839">
    <property type="entry name" value="NO_factor_SlmA"/>
    <property type="match status" value="1"/>
</dbReference>
<dbReference type="InterPro" id="IPR023772">
    <property type="entry name" value="DNA-bd_HTH_TetR-type_CS"/>
</dbReference>
<dbReference type="InterPro" id="IPR009057">
    <property type="entry name" value="Homeodomain-like_sf"/>
</dbReference>
<dbReference type="InterPro" id="IPR050109">
    <property type="entry name" value="HTH-type_TetR-like_transc_reg"/>
</dbReference>
<dbReference type="InterPro" id="IPR001647">
    <property type="entry name" value="HTH_TetR"/>
</dbReference>
<dbReference type="InterPro" id="IPR023769">
    <property type="entry name" value="NO_SlmA"/>
</dbReference>
<dbReference type="InterPro" id="IPR054580">
    <property type="entry name" value="SlmA-like_C"/>
</dbReference>
<dbReference type="InterPro" id="IPR036271">
    <property type="entry name" value="Tet_transcr_reg_TetR-rel_C_sf"/>
</dbReference>
<dbReference type="NCBIfam" id="NF007015">
    <property type="entry name" value="PRK09480.1"/>
    <property type="match status" value="1"/>
</dbReference>
<dbReference type="PANTHER" id="PTHR30055">
    <property type="entry name" value="HTH-TYPE TRANSCRIPTIONAL REGULATOR RUTR"/>
    <property type="match status" value="1"/>
</dbReference>
<dbReference type="PANTHER" id="PTHR30055:SF183">
    <property type="entry name" value="NUCLEOID OCCLUSION FACTOR SLMA"/>
    <property type="match status" value="1"/>
</dbReference>
<dbReference type="Pfam" id="PF22276">
    <property type="entry name" value="SlmA-like_C"/>
    <property type="match status" value="1"/>
</dbReference>
<dbReference type="Pfam" id="PF00440">
    <property type="entry name" value="TetR_N"/>
    <property type="match status" value="1"/>
</dbReference>
<dbReference type="SUPFAM" id="SSF46689">
    <property type="entry name" value="Homeodomain-like"/>
    <property type="match status" value="1"/>
</dbReference>
<dbReference type="SUPFAM" id="SSF48498">
    <property type="entry name" value="Tetracyclin repressor-like, C-terminal domain"/>
    <property type="match status" value="1"/>
</dbReference>
<dbReference type="PROSITE" id="PS01081">
    <property type="entry name" value="HTH_TETR_1"/>
    <property type="match status" value="1"/>
</dbReference>
<dbReference type="PROSITE" id="PS50977">
    <property type="entry name" value="HTH_TETR_2"/>
    <property type="match status" value="1"/>
</dbReference>
<comment type="function">
    <text evidence="1">Required for nucleoid occlusion (NO) phenomenon, which prevents Z-ring formation and cell division over the nucleoid. Acts as a DNA-associated cell division inhibitor that binds simultaneously chromosomal DNA and FtsZ, and disrupts the assembly of FtsZ polymers. SlmA-DNA-binding sequences (SBS) are dispersed on non-Ter regions of the chromosome, preventing FtsZ polymerization at these regions.</text>
</comment>
<comment type="subunit">
    <text evidence="1">Homodimer. Interacts with FtsZ.</text>
</comment>
<comment type="subcellular location">
    <subcellularLocation>
        <location evidence="1">Cytoplasm</location>
        <location evidence="1">Nucleoid</location>
    </subcellularLocation>
</comment>
<comment type="similarity">
    <text evidence="1">Belongs to the nucleoid occlusion factor SlmA family.</text>
</comment>
<sequence>MAEKENTKRNRREEILQALAQMLESSDGSQRITTAKLAANVGVSEAALYRHFPSKTRMFDSLIEFIEDSLMSRINLILQDEKETFNRLRLILLLVLGFAERNPGLTRIMTGHALMFEQDRLQGRINQLFERIEVQLRQVLREKKLRDGQGFIHDEALLATQLLAFCEGMLSRFVRSEFRYRPTQEFDARWPLIVAQLQ</sequence>
<proteinExistence type="inferred from homology"/>
<organism>
    <name type="scientific">Yersinia enterocolitica serotype O:8 / biotype 1B (strain NCTC 13174 / 8081)</name>
    <dbReference type="NCBI Taxonomy" id="393305"/>
    <lineage>
        <taxon>Bacteria</taxon>
        <taxon>Pseudomonadati</taxon>
        <taxon>Pseudomonadota</taxon>
        <taxon>Gammaproteobacteria</taxon>
        <taxon>Enterobacterales</taxon>
        <taxon>Yersiniaceae</taxon>
        <taxon>Yersinia</taxon>
    </lineage>
</organism>
<evidence type="ECO:0000255" key="1">
    <source>
        <dbReference type="HAMAP-Rule" id="MF_01839"/>
    </source>
</evidence>
<feature type="chain" id="PRO_1000070538" description="Nucleoid occlusion factor SlmA">
    <location>
        <begin position="1"/>
        <end position="198"/>
    </location>
</feature>
<feature type="domain" description="HTH tetR-type" evidence="1">
    <location>
        <begin position="9"/>
        <end position="70"/>
    </location>
</feature>
<feature type="DNA-binding region" description="H-T-H motif" evidence="1">
    <location>
        <begin position="33"/>
        <end position="52"/>
    </location>
</feature>
<feature type="coiled-coil region" evidence="1">
    <location>
        <begin position="119"/>
        <end position="144"/>
    </location>
</feature>